<organism>
    <name type="scientific">Candida glabrata (strain ATCC 2001 / BCRC 20586 / JCM 3761 / NBRC 0622 / NRRL Y-65 / CBS 138)</name>
    <name type="common">Yeast</name>
    <name type="synonym">Nakaseomyces glabratus</name>
    <dbReference type="NCBI Taxonomy" id="284593"/>
    <lineage>
        <taxon>Eukaryota</taxon>
        <taxon>Fungi</taxon>
        <taxon>Dikarya</taxon>
        <taxon>Ascomycota</taxon>
        <taxon>Saccharomycotina</taxon>
        <taxon>Saccharomycetes</taxon>
        <taxon>Saccharomycetales</taxon>
        <taxon>Saccharomycetaceae</taxon>
        <taxon>Nakaseomyces</taxon>
    </lineage>
</organism>
<evidence type="ECO:0000255" key="1">
    <source>
        <dbReference type="HAMAP-Rule" id="MF_03178"/>
    </source>
</evidence>
<accession>Q6FRH1</accession>
<reference key="1">
    <citation type="journal article" date="2004" name="Nature">
        <title>Genome evolution in yeasts.</title>
        <authorList>
            <person name="Dujon B."/>
            <person name="Sherman D."/>
            <person name="Fischer G."/>
            <person name="Durrens P."/>
            <person name="Casaregola S."/>
            <person name="Lafontaine I."/>
            <person name="de Montigny J."/>
            <person name="Marck C."/>
            <person name="Neuveglise C."/>
            <person name="Talla E."/>
            <person name="Goffard N."/>
            <person name="Frangeul L."/>
            <person name="Aigle M."/>
            <person name="Anthouard V."/>
            <person name="Babour A."/>
            <person name="Barbe V."/>
            <person name="Barnay S."/>
            <person name="Blanchin S."/>
            <person name="Beckerich J.-M."/>
            <person name="Beyne E."/>
            <person name="Bleykasten C."/>
            <person name="Boisrame A."/>
            <person name="Boyer J."/>
            <person name="Cattolico L."/>
            <person name="Confanioleri F."/>
            <person name="de Daruvar A."/>
            <person name="Despons L."/>
            <person name="Fabre E."/>
            <person name="Fairhead C."/>
            <person name="Ferry-Dumazet H."/>
            <person name="Groppi A."/>
            <person name="Hantraye F."/>
            <person name="Hennequin C."/>
            <person name="Jauniaux N."/>
            <person name="Joyet P."/>
            <person name="Kachouri R."/>
            <person name="Kerrest A."/>
            <person name="Koszul R."/>
            <person name="Lemaire M."/>
            <person name="Lesur I."/>
            <person name="Ma L."/>
            <person name="Muller H."/>
            <person name="Nicaud J.-M."/>
            <person name="Nikolski M."/>
            <person name="Oztas S."/>
            <person name="Ozier-Kalogeropoulos O."/>
            <person name="Pellenz S."/>
            <person name="Potier S."/>
            <person name="Richard G.-F."/>
            <person name="Straub M.-L."/>
            <person name="Suleau A."/>
            <person name="Swennen D."/>
            <person name="Tekaia F."/>
            <person name="Wesolowski-Louvel M."/>
            <person name="Westhof E."/>
            <person name="Wirth B."/>
            <person name="Zeniou-Meyer M."/>
            <person name="Zivanovic Y."/>
            <person name="Bolotin-Fukuhara M."/>
            <person name="Thierry A."/>
            <person name="Bouchier C."/>
            <person name="Caudron B."/>
            <person name="Scarpelli C."/>
            <person name="Gaillardin C."/>
            <person name="Weissenbach J."/>
            <person name="Wincker P."/>
            <person name="Souciet J.-L."/>
        </authorList>
    </citation>
    <scope>NUCLEOTIDE SEQUENCE [LARGE SCALE GENOMIC DNA]</scope>
    <source>
        <strain>ATCC 2001 / BCRC 20586 / JCM 3761 / NBRC 0622 / NRRL Y-65 / CBS 138</strain>
    </source>
</reference>
<protein>
    <recommendedName>
        <fullName evidence="1">NADPH-dependent diflavin oxidoreductase 1</fullName>
        <ecNumber evidence="1">1.18.1.-</ecNumber>
    </recommendedName>
    <alternativeName>
        <fullName evidence="1">NADPH-dependent FMN and FAD-containing oxidoreductase</fullName>
    </alternativeName>
</protein>
<gene>
    <name evidence="1" type="primary">TAH18</name>
    <name type="ordered locus">CAGL0H08580g</name>
</gene>
<dbReference type="EC" id="1.18.1.-" evidence="1"/>
<dbReference type="EMBL" id="CR380954">
    <property type="protein sequence ID" value="CAG60106.1"/>
    <property type="molecule type" value="Genomic_DNA"/>
</dbReference>
<dbReference type="RefSeq" id="XP_447173.1">
    <property type="nucleotide sequence ID" value="XM_447173.1"/>
</dbReference>
<dbReference type="SMR" id="Q6FRH1"/>
<dbReference type="FunCoup" id="Q6FRH1">
    <property type="interactions" value="790"/>
</dbReference>
<dbReference type="STRING" id="284593.Q6FRH1"/>
<dbReference type="EnsemblFungi" id="CAGL0H08580g-T">
    <property type="protein sequence ID" value="CAGL0H08580g-T-p1"/>
    <property type="gene ID" value="CAGL0H08580g"/>
</dbReference>
<dbReference type="KEGG" id="cgr:2888507"/>
<dbReference type="CGD" id="CAL0131952">
    <property type="gene designation" value="CAGL0H08580g"/>
</dbReference>
<dbReference type="VEuPathDB" id="FungiDB:CAGL0H08580g"/>
<dbReference type="eggNOG" id="KOG1159">
    <property type="taxonomic scope" value="Eukaryota"/>
</dbReference>
<dbReference type="HOGENOM" id="CLU_001570_17_6_1"/>
<dbReference type="InParanoid" id="Q6FRH1"/>
<dbReference type="OMA" id="DIMSIPR"/>
<dbReference type="Proteomes" id="UP000002428">
    <property type="component" value="Chromosome H"/>
</dbReference>
<dbReference type="GO" id="GO:0097361">
    <property type="term" value="C:cytosolic [4Fe-4S] assembly targeting complex"/>
    <property type="evidence" value="ECO:0007669"/>
    <property type="project" value="EnsemblFungi"/>
</dbReference>
<dbReference type="GO" id="GO:0005739">
    <property type="term" value="C:mitochondrion"/>
    <property type="evidence" value="ECO:0007669"/>
    <property type="project" value="UniProtKB-SubCell"/>
</dbReference>
<dbReference type="GO" id="GO:0050660">
    <property type="term" value="F:flavin adenine dinucleotide binding"/>
    <property type="evidence" value="ECO:0007669"/>
    <property type="project" value="UniProtKB-UniRule"/>
</dbReference>
<dbReference type="GO" id="GO:0010181">
    <property type="term" value="F:FMN binding"/>
    <property type="evidence" value="ECO:0007669"/>
    <property type="project" value="UniProtKB-UniRule"/>
</dbReference>
<dbReference type="GO" id="GO:0050661">
    <property type="term" value="F:NADP binding"/>
    <property type="evidence" value="ECO:0007669"/>
    <property type="project" value="UniProtKB-UniRule"/>
</dbReference>
<dbReference type="GO" id="GO:0003958">
    <property type="term" value="F:NADPH-hemoprotein reductase activity"/>
    <property type="evidence" value="ECO:0007669"/>
    <property type="project" value="InterPro"/>
</dbReference>
<dbReference type="GO" id="GO:0034599">
    <property type="term" value="P:cellular response to oxidative stress"/>
    <property type="evidence" value="ECO:0007669"/>
    <property type="project" value="EnsemblFungi"/>
</dbReference>
<dbReference type="GO" id="GO:0016226">
    <property type="term" value="P:iron-sulfur cluster assembly"/>
    <property type="evidence" value="ECO:0007669"/>
    <property type="project" value="UniProtKB-UniRule"/>
</dbReference>
<dbReference type="GO" id="GO:0006809">
    <property type="term" value="P:nitric oxide biosynthetic process"/>
    <property type="evidence" value="ECO:0007669"/>
    <property type="project" value="EnsemblFungi"/>
</dbReference>
<dbReference type="GO" id="GO:0045429">
    <property type="term" value="P:positive regulation of nitric oxide biosynthetic process"/>
    <property type="evidence" value="ECO:0007669"/>
    <property type="project" value="EnsemblFungi"/>
</dbReference>
<dbReference type="FunFam" id="1.20.990.10:FF:000008">
    <property type="entry name" value="NADPH-dependent diflavin oxidoreductase 1"/>
    <property type="match status" value="1"/>
</dbReference>
<dbReference type="FunFam" id="3.40.50.360:FF:000056">
    <property type="entry name" value="NADPH-dependent diflavin oxidoreductase 1"/>
    <property type="match status" value="1"/>
</dbReference>
<dbReference type="Gene3D" id="3.40.50.360">
    <property type="match status" value="1"/>
</dbReference>
<dbReference type="Gene3D" id="1.20.990.10">
    <property type="entry name" value="NADPH-cytochrome p450 Reductase, Chain A, domain 3"/>
    <property type="match status" value="1"/>
</dbReference>
<dbReference type="Gene3D" id="3.40.50.80">
    <property type="entry name" value="Nucleotide-binding domain of ferredoxin-NADP reductase (FNR) module"/>
    <property type="match status" value="1"/>
</dbReference>
<dbReference type="Gene3D" id="2.40.30.10">
    <property type="entry name" value="Translation factors"/>
    <property type="match status" value="1"/>
</dbReference>
<dbReference type="HAMAP" id="MF_03178">
    <property type="entry name" value="NDOR1"/>
    <property type="match status" value="1"/>
</dbReference>
<dbReference type="InterPro" id="IPR003097">
    <property type="entry name" value="CysJ-like_FAD-binding"/>
</dbReference>
<dbReference type="InterPro" id="IPR017927">
    <property type="entry name" value="FAD-bd_FR_type"/>
</dbReference>
<dbReference type="InterPro" id="IPR001094">
    <property type="entry name" value="Flavdoxin-like"/>
</dbReference>
<dbReference type="InterPro" id="IPR008254">
    <property type="entry name" value="Flavodoxin/NO_synth"/>
</dbReference>
<dbReference type="InterPro" id="IPR001709">
    <property type="entry name" value="Flavoprot_Pyr_Nucl_cyt_Rdtase"/>
</dbReference>
<dbReference type="InterPro" id="IPR029039">
    <property type="entry name" value="Flavoprotein-like_sf"/>
</dbReference>
<dbReference type="InterPro" id="IPR039261">
    <property type="entry name" value="FNR_nucleotide-bd"/>
</dbReference>
<dbReference type="InterPro" id="IPR023173">
    <property type="entry name" value="NADPH_Cyt_P450_Rdtase_alpha"/>
</dbReference>
<dbReference type="InterPro" id="IPR028879">
    <property type="entry name" value="NDOR1"/>
</dbReference>
<dbReference type="InterPro" id="IPR001433">
    <property type="entry name" value="OxRdtase_FAD/NAD-bd"/>
</dbReference>
<dbReference type="InterPro" id="IPR017938">
    <property type="entry name" value="Riboflavin_synthase-like_b-brl"/>
</dbReference>
<dbReference type="PANTHER" id="PTHR19384:SF10">
    <property type="entry name" value="NADPH-DEPENDENT DIFLAVIN OXIDOREDUCTASE 1"/>
    <property type="match status" value="1"/>
</dbReference>
<dbReference type="PANTHER" id="PTHR19384">
    <property type="entry name" value="NITRIC OXIDE SYNTHASE-RELATED"/>
    <property type="match status" value="1"/>
</dbReference>
<dbReference type="Pfam" id="PF00667">
    <property type="entry name" value="FAD_binding_1"/>
    <property type="match status" value="1"/>
</dbReference>
<dbReference type="Pfam" id="PF00258">
    <property type="entry name" value="Flavodoxin_1"/>
    <property type="match status" value="1"/>
</dbReference>
<dbReference type="Pfam" id="PF00175">
    <property type="entry name" value="NAD_binding_1"/>
    <property type="match status" value="1"/>
</dbReference>
<dbReference type="PRINTS" id="PR00369">
    <property type="entry name" value="FLAVODOXIN"/>
</dbReference>
<dbReference type="PRINTS" id="PR00371">
    <property type="entry name" value="FPNCR"/>
</dbReference>
<dbReference type="SUPFAM" id="SSF52343">
    <property type="entry name" value="Ferredoxin reductase-like, C-terminal NADP-linked domain"/>
    <property type="match status" value="1"/>
</dbReference>
<dbReference type="SUPFAM" id="SSF52218">
    <property type="entry name" value="Flavoproteins"/>
    <property type="match status" value="1"/>
</dbReference>
<dbReference type="SUPFAM" id="SSF63380">
    <property type="entry name" value="Riboflavin synthase domain-like"/>
    <property type="match status" value="1"/>
</dbReference>
<dbReference type="PROSITE" id="PS51384">
    <property type="entry name" value="FAD_FR"/>
    <property type="match status" value="1"/>
</dbReference>
<dbReference type="PROSITE" id="PS50902">
    <property type="entry name" value="FLAVODOXIN_LIKE"/>
    <property type="match status" value="1"/>
</dbReference>
<sequence length="621" mass="72063">MSSSKIAVLYGSETGNAQDFAAILSHKLNRLHFKHTFSSLADYKREDILRCRYLFIVCSTTGQGELPRNVYETVTGDQKNTLWTFLKKKKLPADFLNHIKTAFLGLGDSSYPKFNYALRIIHNRMVNQLGAKEIFDRMEADEQSMAGSNKGTGLGIESVYFEFEKRIITYLMDRFPTRKVGNEIIQREEIDKELYLEPITYLRIDDPHDQQSFSGGPTTFVGDKLIKTGTITLNKRITAKDHFQDVRQFTFESCDDIKYKPGDTVALYSYNTDQSVERMLECQPQWIPLADKPLSFTNGIPTHLLDGGVVQPLTLRNLLKYHCDFMSIPRSSFFLKIWTFATDVTRMERGEEQMKDQRQKLYEFATDEDMQELYDYCNRPRRSILEVMEDFLSIRLPLEYLLDFFPPIKPRLYSISSTANCNNIELTVAIVKYKTILRKIRTGVCTDFISKLKVGDKIRYKIQQNDLIKEEYRSNPFVMVGPGVGLAPLLSAVRSKVSPEMSLYFGCRFKDKDYLHGKELEDMANQGLIKFYPVFSRDRENSPDTKYVQDVLWKFGEEVTNLLVERKGIFFLCGASGKMPIQIRLTLLEMLKKWGGFKDDASAKEYLRSMEKEYRYIQETW</sequence>
<comment type="function">
    <text evidence="1">NADPH-dependent reductase which is a central component of the cytosolic iron-sulfur (Fe-S) protein assembly (CIA) machinery. Transfers electrons from NADPH via its FAD and FMN prosthetic groups to the [2Fe-2S] cluster of DRE2, another key component of the CIA machinery. In turn, this reduced cluster provides electrons for assembly of cytosolic iron-sulfur cluster proteins. Positively controls H(2)O(2)-induced cell death.</text>
</comment>
<comment type="catalytic activity">
    <reaction evidence="1">
        <text>2 oxidized [2Fe-2S]-[protein] + NADPH = 2 reduced [2Fe-2S]-[protein] + NADP(+) + H(+)</text>
        <dbReference type="Rhea" id="RHEA:67716"/>
        <dbReference type="Rhea" id="RHEA-COMP:17327"/>
        <dbReference type="Rhea" id="RHEA-COMP:17328"/>
        <dbReference type="ChEBI" id="CHEBI:15378"/>
        <dbReference type="ChEBI" id="CHEBI:33737"/>
        <dbReference type="ChEBI" id="CHEBI:33738"/>
        <dbReference type="ChEBI" id="CHEBI:57783"/>
        <dbReference type="ChEBI" id="CHEBI:58349"/>
    </reaction>
    <physiologicalReaction direction="left-to-right" evidence="1">
        <dbReference type="Rhea" id="RHEA:67717"/>
    </physiologicalReaction>
</comment>
<comment type="cofactor">
    <cofactor evidence="1">
        <name>FAD</name>
        <dbReference type="ChEBI" id="CHEBI:57692"/>
    </cofactor>
</comment>
<comment type="cofactor">
    <cofactor evidence="1">
        <name>FMN</name>
        <dbReference type="ChEBI" id="CHEBI:58210"/>
    </cofactor>
</comment>
<comment type="subunit">
    <text evidence="1">Interacts with DRE2; as part of the cytosolic iron-sulfur (Fe-S) protein assembly (CIA) machinery.</text>
</comment>
<comment type="subcellular location">
    <subcellularLocation>
        <location evidence="1">Cytoplasm</location>
    </subcellularLocation>
    <subcellularLocation>
        <location evidence="1">Mitochondrion</location>
    </subcellularLocation>
    <text evidence="1">Relocalizes to mitochondria after H(2)O(2) exposure.</text>
</comment>
<comment type="similarity">
    <text evidence="1">Belongs to the NADPH-dependent diflavin oxidoreductase NDOR1 family.</text>
</comment>
<comment type="similarity">
    <text evidence="1">In the N-terminal section; belongs to the flavodoxin family.</text>
</comment>
<comment type="similarity">
    <text evidence="1">In the C-terminal section; belongs to the flavoprotein pyridine nucleotide cytochrome reductase family.</text>
</comment>
<feature type="chain" id="PRO_0000167615" description="NADPH-dependent diflavin oxidoreductase 1">
    <location>
        <begin position="1"/>
        <end position="621"/>
    </location>
</feature>
<feature type="domain" description="Flavodoxin-like" evidence="1">
    <location>
        <begin position="6"/>
        <end position="168"/>
    </location>
</feature>
<feature type="domain" description="FAD-binding FR-type" evidence="1">
    <location>
        <begin position="224"/>
        <end position="489"/>
    </location>
</feature>
<feature type="binding site" evidence="1">
    <location>
        <begin position="12"/>
        <end position="17"/>
    </location>
    <ligand>
        <name>FMN</name>
        <dbReference type="ChEBI" id="CHEBI:58210"/>
    </ligand>
</feature>
<feature type="binding site" evidence="1">
    <location>
        <begin position="59"/>
        <end position="62"/>
    </location>
    <ligand>
        <name>FMN</name>
        <dbReference type="ChEBI" id="CHEBI:58210"/>
    </ligand>
</feature>
<feature type="binding site" evidence="1">
    <location>
        <begin position="106"/>
        <end position="115"/>
    </location>
    <ligand>
        <name>FMN</name>
        <dbReference type="ChEBI" id="CHEBI:58210"/>
    </ligand>
</feature>
<feature type="binding site" evidence="1">
    <location>
        <position position="142"/>
    </location>
    <ligand>
        <name>FMN</name>
        <dbReference type="ChEBI" id="CHEBI:58210"/>
    </ligand>
</feature>
<feature type="binding site" evidence="1">
    <location>
        <position position="381"/>
    </location>
    <ligand>
        <name>FAD</name>
        <dbReference type="ChEBI" id="CHEBI:57692"/>
    </ligand>
</feature>
<feature type="binding site" evidence="1">
    <location>
        <begin position="411"/>
        <end position="414"/>
    </location>
    <ligand>
        <name>FAD</name>
        <dbReference type="ChEBI" id="CHEBI:57692"/>
    </ligand>
</feature>
<feature type="binding site" evidence="1">
    <location>
        <begin position="443"/>
        <end position="446"/>
    </location>
    <ligand>
        <name>FAD</name>
        <dbReference type="ChEBI" id="CHEBI:57692"/>
    </ligand>
</feature>
<feature type="binding site" evidence="1">
    <location>
        <begin position="536"/>
        <end position="537"/>
    </location>
    <ligand>
        <name>NADP(+)</name>
        <dbReference type="ChEBI" id="CHEBI:58349"/>
    </ligand>
</feature>
<feature type="binding site" evidence="1">
    <location>
        <begin position="545"/>
        <end position="549"/>
    </location>
    <ligand>
        <name>NADP(+)</name>
        <dbReference type="ChEBI" id="CHEBI:58349"/>
    </ligand>
</feature>
<feature type="binding site" evidence="1">
    <location>
        <position position="621"/>
    </location>
    <ligand>
        <name>FAD</name>
        <dbReference type="ChEBI" id="CHEBI:57692"/>
    </ligand>
</feature>
<proteinExistence type="inferred from homology"/>
<name>NDOR1_CANGA</name>
<keyword id="KW-0963">Cytoplasm</keyword>
<keyword id="KW-0274">FAD</keyword>
<keyword id="KW-0285">Flavoprotein</keyword>
<keyword id="KW-0288">FMN</keyword>
<keyword id="KW-0496">Mitochondrion</keyword>
<keyword id="KW-0521">NADP</keyword>
<keyword id="KW-0560">Oxidoreductase</keyword>
<keyword id="KW-1185">Reference proteome</keyword>